<organism>
    <name type="scientific">Gloydius halys</name>
    <name type="common">Chinese water mocassin</name>
    <name type="synonym">Agkistrodon halys</name>
    <dbReference type="NCBI Taxonomy" id="8714"/>
    <lineage>
        <taxon>Eukaryota</taxon>
        <taxon>Metazoa</taxon>
        <taxon>Chordata</taxon>
        <taxon>Craniata</taxon>
        <taxon>Vertebrata</taxon>
        <taxon>Euteleostomi</taxon>
        <taxon>Lepidosauria</taxon>
        <taxon>Squamata</taxon>
        <taxon>Bifurcata</taxon>
        <taxon>Unidentata</taxon>
        <taxon>Episquamata</taxon>
        <taxon>Toxicofera</taxon>
        <taxon>Serpentes</taxon>
        <taxon>Colubroidea</taxon>
        <taxon>Viperidae</taxon>
        <taxon>Crotalinae</taxon>
        <taxon>Gloydius</taxon>
    </lineage>
</organism>
<comment type="function">
    <molecule>Snake venom metalloproteinase</molecule>
    <text evidence="1">Impairs hemostasis in the envenomed animal.</text>
</comment>
<comment type="function">
    <molecule>Disintegrin halystatin</molecule>
    <text evidence="1">Inhibits platelet aggregation induced by ADP, thrombin, platelet-activating factor and collagen. Acts by inhibiting fibrinogen interaction with platelet receptors GPIIb/GPIIIa (ITGA2B/ITGB3) (By similarity).</text>
</comment>
<comment type="cofactor">
    <cofactor evidence="1">
        <name>Zn(2+)</name>
        <dbReference type="ChEBI" id="CHEBI:29105"/>
    </cofactor>
    <text evidence="1">Binds 1 zinc ion per subunit.</text>
</comment>
<comment type="subunit">
    <text evidence="1">Monomer.</text>
</comment>
<comment type="subcellular location">
    <subcellularLocation>
        <location evidence="1">Secreted</location>
    </subcellularLocation>
</comment>
<comment type="tissue specificity">
    <text>Expressed by the venom gland.</text>
</comment>
<comment type="miscellaneous">
    <text>The disintegrin belongs to the medium disintegrin subfamily.</text>
</comment>
<comment type="similarity">
    <text evidence="6">Belongs to the venom metalloproteinase (M12B) family. P-II subfamily. P-IIa sub-subfamily.</text>
</comment>
<comment type="caution">
    <text evidence="6">The disintegrin is also encoded by another precursor (AC Q90220).</text>
</comment>
<protein>
    <recommendedName>
        <fullName>Zinc metalloproteinase/disintegrin</fullName>
    </recommendedName>
    <component>
        <recommendedName>
            <fullName>Snake venom metalloproteinase</fullName>
            <shortName>SVMP</shortName>
            <ecNumber>3.4.24.-</ecNumber>
        </recommendedName>
    </component>
    <component>
        <recommendedName>
            <fullName>Disintegrin halystatin</fullName>
        </recommendedName>
        <alternativeName>
            <fullName>Disintegrin brevicaudin-1b</fullName>
        </alternativeName>
    </component>
</protein>
<sequence>MIQVLLVIICLAVPYQGSSIILESGNVNDYEVVYPRKVTALPKGAVQPKYEDAMQYELKVNGEPVVLHLEKNKGLFSKDYIETHYSPDGRKITTNPPVEDHCYYHGRIQNDADSTASISACNGLKGHFKLQGETYLIEPLKLSNSEAHAVYKYEDVEKEDEAPKMCGVTQNWESYEPIKKASQSNLTPAHQRYIELVIVADHGMFTKYDSNLDTIRTWVHELVNSINEFYRSLNIDVSLTELEIWSNEDLINVQPAAPHTLDSFGKWRERDLLHRIHHDNAMLLTAIDFDEPTIGLAYVGTMCNPKGSTGVVQDHSTINLRVAVTMAHEIGHNLGIHHDTGSCSCGGYSCIMSPVISHEPSKYFSDCSYTQCWDFIMNQKPQCILNKPLRTDTVSTPVSGNELLEAGEECDCGSPGNPCCDAATCKLRQGAQCAEGLCCDQCRFMKKGTVCRIARGDDMDDYCNGISAGCPRNPFHA</sequence>
<dbReference type="EC" id="3.4.24.-"/>
<dbReference type="EMBL" id="DQ457057">
    <property type="protein sequence ID" value="ABE73077.1"/>
    <property type="molecule type" value="mRNA"/>
</dbReference>
<dbReference type="SMR" id="Q1PBD1"/>
<dbReference type="MEROPS" id="M12.326"/>
<dbReference type="GO" id="GO:0005576">
    <property type="term" value="C:extracellular region"/>
    <property type="evidence" value="ECO:0007669"/>
    <property type="project" value="UniProtKB-SubCell"/>
</dbReference>
<dbReference type="GO" id="GO:0005886">
    <property type="term" value="C:plasma membrane"/>
    <property type="evidence" value="ECO:0007669"/>
    <property type="project" value="TreeGrafter"/>
</dbReference>
<dbReference type="GO" id="GO:0046872">
    <property type="term" value="F:metal ion binding"/>
    <property type="evidence" value="ECO:0007669"/>
    <property type="project" value="UniProtKB-KW"/>
</dbReference>
<dbReference type="GO" id="GO:0004222">
    <property type="term" value="F:metalloendopeptidase activity"/>
    <property type="evidence" value="ECO:0007669"/>
    <property type="project" value="InterPro"/>
</dbReference>
<dbReference type="GO" id="GO:0090729">
    <property type="term" value="F:toxin activity"/>
    <property type="evidence" value="ECO:0007669"/>
    <property type="project" value="UniProtKB-KW"/>
</dbReference>
<dbReference type="GO" id="GO:0030574">
    <property type="term" value="P:collagen catabolic process"/>
    <property type="evidence" value="ECO:0007669"/>
    <property type="project" value="UniProtKB-KW"/>
</dbReference>
<dbReference type="GO" id="GO:0006508">
    <property type="term" value="P:proteolysis"/>
    <property type="evidence" value="ECO:0007669"/>
    <property type="project" value="UniProtKB-KW"/>
</dbReference>
<dbReference type="CDD" id="cd04269">
    <property type="entry name" value="ZnMc_adamalysin_II_like"/>
    <property type="match status" value="1"/>
</dbReference>
<dbReference type="FunFam" id="3.40.390.10:FF:000002">
    <property type="entry name" value="Disintegrin and metalloproteinase domain-containing protein 22"/>
    <property type="match status" value="1"/>
</dbReference>
<dbReference type="FunFam" id="4.10.70.10:FF:000005">
    <property type="entry name" value="Zinc metalloproteinase/disintegrin"/>
    <property type="match status" value="1"/>
</dbReference>
<dbReference type="Gene3D" id="3.40.390.10">
    <property type="entry name" value="Collagenase (Catalytic Domain)"/>
    <property type="match status" value="1"/>
</dbReference>
<dbReference type="Gene3D" id="4.10.70.10">
    <property type="entry name" value="Disintegrin domain"/>
    <property type="match status" value="1"/>
</dbReference>
<dbReference type="InterPro" id="IPR018358">
    <property type="entry name" value="Disintegrin_CS"/>
</dbReference>
<dbReference type="InterPro" id="IPR001762">
    <property type="entry name" value="Disintegrin_dom"/>
</dbReference>
<dbReference type="InterPro" id="IPR036436">
    <property type="entry name" value="Disintegrin_dom_sf"/>
</dbReference>
<dbReference type="InterPro" id="IPR024079">
    <property type="entry name" value="MetalloPept_cat_dom_sf"/>
</dbReference>
<dbReference type="InterPro" id="IPR001590">
    <property type="entry name" value="Peptidase_M12B"/>
</dbReference>
<dbReference type="InterPro" id="IPR002870">
    <property type="entry name" value="Peptidase_M12B_N"/>
</dbReference>
<dbReference type="InterPro" id="IPR034027">
    <property type="entry name" value="Reprolysin_adamalysin"/>
</dbReference>
<dbReference type="PANTHER" id="PTHR11905">
    <property type="entry name" value="ADAM A DISINTEGRIN AND METALLOPROTEASE DOMAIN"/>
    <property type="match status" value="1"/>
</dbReference>
<dbReference type="PANTHER" id="PTHR11905:SF32">
    <property type="entry name" value="DISINTEGRIN AND METALLOPROTEINASE DOMAIN-CONTAINING PROTEIN 28"/>
    <property type="match status" value="1"/>
</dbReference>
<dbReference type="Pfam" id="PF00200">
    <property type="entry name" value="Disintegrin"/>
    <property type="match status" value="1"/>
</dbReference>
<dbReference type="Pfam" id="PF01562">
    <property type="entry name" value="Pep_M12B_propep"/>
    <property type="match status" value="1"/>
</dbReference>
<dbReference type="Pfam" id="PF01421">
    <property type="entry name" value="Reprolysin"/>
    <property type="match status" value="1"/>
</dbReference>
<dbReference type="PRINTS" id="PR00289">
    <property type="entry name" value="DISINTEGRIN"/>
</dbReference>
<dbReference type="SMART" id="SM00050">
    <property type="entry name" value="DISIN"/>
    <property type="match status" value="1"/>
</dbReference>
<dbReference type="SUPFAM" id="SSF57552">
    <property type="entry name" value="Blood coagulation inhibitor (disintegrin)"/>
    <property type="match status" value="1"/>
</dbReference>
<dbReference type="SUPFAM" id="SSF55486">
    <property type="entry name" value="Metalloproteases ('zincins'), catalytic domain"/>
    <property type="match status" value="1"/>
</dbReference>
<dbReference type="PROSITE" id="PS50215">
    <property type="entry name" value="ADAM_MEPRO"/>
    <property type="match status" value="1"/>
</dbReference>
<dbReference type="PROSITE" id="PS00427">
    <property type="entry name" value="DISINTEGRIN_1"/>
    <property type="match status" value="1"/>
</dbReference>
<dbReference type="PROSITE" id="PS50214">
    <property type="entry name" value="DISINTEGRIN_2"/>
    <property type="match status" value="1"/>
</dbReference>
<dbReference type="PROSITE" id="PS00142">
    <property type="entry name" value="ZINC_PROTEASE"/>
    <property type="match status" value="1"/>
</dbReference>
<accession>Q1PBD1</accession>
<proteinExistence type="evidence at transcript level"/>
<reference key="1">
    <citation type="submission" date="2006-03" db="EMBL/GenBank/DDBJ databases">
        <authorList>
            <person name="Zhang S.-T."/>
            <person name="Guo A.-G."/>
        </authorList>
    </citation>
    <scope>NUCLEOTIDE SEQUENCE [MRNA]</scope>
    <source>
        <tissue>Venom gland</tissue>
    </source>
</reference>
<name>VM2DI_GLOHA</name>
<evidence type="ECO:0000250" key="1"/>
<evidence type="ECO:0000250" key="2">
    <source>
        <dbReference type="UniProtKB" id="Q0NZX5"/>
    </source>
</evidence>
<evidence type="ECO:0000255" key="3"/>
<evidence type="ECO:0000255" key="4">
    <source>
        <dbReference type="PROSITE-ProRule" id="PRU00068"/>
    </source>
</evidence>
<evidence type="ECO:0000255" key="5">
    <source>
        <dbReference type="PROSITE-ProRule" id="PRU00276"/>
    </source>
</evidence>
<evidence type="ECO:0000305" key="6"/>
<feature type="signal peptide" evidence="3">
    <location>
        <begin position="1"/>
        <end position="19"/>
    </location>
</feature>
<feature type="propeptide" id="PRO_0000319488" evidence="1">
    <location>
        <begin position="20"/>
        <end position="186"/>
    </location>
</feature>
<feature type="chain" id="PRO_0000319489" description="Snake venom metalloproteinase" evidence="1">
    <location>
        <begin position="187"/>
        <end position="388"/>
    </location>
</feature>
<feature type="propeptide" id="PRO_0000424448" evidence="1">
    <location>
        <begin position="389"/>
        <end position="404"/>
    </location>
</feature>
<feature type="chain" id="PRO_0000319490" description="Disintegrin halystatin">
    <location>
        <begin position="405"/>
        <end position="477"/>
    </location>
</feature>
<feature type="domain" description="Peptidase M12B" evidence="5">
    <location>
        <begin position="192"/>
        <end position="388"/>
    </location>
</feature>
<feature type="domain" description="Disintegrin" evidence="4">
    <location>
        <begin position="396"/>
        <end position="477"/>
    </location>
</feature>
<feature type="short sequence motif" description="Cell attachment site">
    <location>
        <begin position="455"/>
        <end position="457"/>
    </location>
</feature>
<feature type="active site" evidence="5">
    <location>
        <position position="329"/>
    </location>
</feature>
<feature type="binding site" evidence="1">
    <location>
        <position position="195"/>
    </location>
    <ligand>
        <name>Ca(2+)</name>
        <dbReference type="ChEBI" id="CHEBI:29108"/>
    </ligand>
</feature>
<feature type="binding site" evidence="1">
    <location>
        <position position="279"/>
    </location>
    <ligand>
        <name>Ca(2+)</name>
        <dbReference type="ChEBI" id="CHEBI:29108"/>
    </ligand>
</feature>
<feature type="binding site" evidence="5">
    <location>
        <position position="328"/>
    </location>
    <ligand>
        <name>Zn(2+)</name>
        <dbReference type="ChEBI" id="CHEBI:29105"/>
        <note>catalytic</note>
    </ligand>
</feature>
<feature type="binding site" evidence="5">
    <location>
        <position position="332"/>
    </location>
    <ligand>
        <name>Zn(2+)</name>
        <dbReference type="ChEBI" id="CHEBI:29105"/>
        <note>catalytic</note>
    </ligand>
</feature>
<feature type="binding site" evidence="5">
    <location>
        <position position="338"/>
    </location>
    <ligand>
        <name>Zn(2+)</name>
        <dbReference type="ChEBI" id="CHEBI:29105"/>
        <note>catalytic</note>
    </ligand>
</feature>
<feature type="binding site" evidence="1">
    <location>
        <position position="383"/>
    </location>
    <ligand>
        <name>Ca(2+)</name>
        <dbReference type="ChEBI" id="CHEBI:29108"/>
    </ligand>
</feature>
<feature type="binding site" evidence="1">
    <location>
        <position position="386"/>
    </location>
    <ligand>
        <name>Ca(2+)</name>
        <dbReference type="ChEBI" id="CHEBI:29108"/>
    </ligand>
</feature>
<feature type="disulfide bond" evidence="5">
    <location>
        <begin position="303"/>
        <end position="383"/>
    </location>
</feature>
<feature type="disulfide bond" evidence="5">
    <location>
        <begin position="343"/>
        <end position="367"/>
    </location>
</feature>
<feature type="disulfide bond" evidence="5">
    <location>
        <begin position="345"/>
        <end position="350"/>
    </location>
</feature>
<feature type="disulfide bond" evidence="2">
    <location>
        <begin position="410"/>
        <end position="425"/>
    </location>
</feature>
<feature type="disulfide bond" evidence="2">
    <location>
        <begin position="412"/>
        <end position="420"/>
    </location>
</feature>
<feature type="disulfide bond" evidence="2">
    <location>
        <begin position="419"/>
        <end position="442"/>
    </location>
</feature>
<feature type="disulfide bond" evidence="2">
    <location>
        <begin position="433"/>
        <end position="439"/>
    </location>
</feature>
<feature type="disulfide bond" evidence="2">
    <location>
        <begin position="438"/>
        <end position="463"/>
    </location>
</feature>
<feature type="disulfide bond" evidence="2 4">
    <location>
        <begin position="451"/>
        <end position="470"/>
    </location>
</feature>
<keyword id="KW-0106">Calcium</keyword>
<keyword id="KW-1217">Cell adhesion impairing toxin</keyword>
<keyword id="KW-0177">Collagen degradation</keyword>
<keyword id="KW-1015">Disulfide bond</keyword>
<keyword id="KW-1199">Hemostasis impairing toxin</keyword>
<keyword id="KW-0378">Hydrolase</keyword>
<keyword id="KW-0479">Metal-binding</keyword>
<keyword id="KW-0482">Metalloprotease</keyword>
<keyword id="KW-1201">Platelet aggregation inhibiting toxin</keyword>
<keyword id="KW-0645">Protease</keyword>
<keyword id="KW-0964">Secreted</keyword>
<keyword id="KW-0732">Signal</keyword>
<keyword id="KW-0800">Toxin</keyword>
<keyword id="KW-0862">Zinc</keyword>
<keyword id="KW-0865">Zymogen</keyword>